<organism>
    <name type="scientific">Conus fergusoni</name>
    <name type="common">Ferguson's cone</name>
    <dbReference type="NCBI Taxonomy" id="257326"/>
    <lineage>
        <taxon>Eukaryota</taxon>
        <taxon>Metazoa</taxon>
        <taxon>Spiralia</taxon>
        <taxon>Lophotrochozoa</taxon>
        <taxon>Mollusca</taxon>
        <taxon>Gastropoda</taxon>
        <taxon>Caenogastropoda</taxon>
        <taxon>Neogastropoda</taxon>
        <taxon>Conoidea</taxon>
        <taxon>Conidae</taxon>
        <taxon>Conus</taxon>
        <taxon>Pyruconus</taxon>
    </lineage>
</organism>
<proteinExistence type="evidence at protein level"/>
<protein>
    <recommendedName>
        <fullName evidence="6">Alpha-conotoxin FrXXA</fullName>
    </recommendedName>
    <alternativeName>
        <fullName evidence="6">Toxin 1</fullName>
    </alternativeName>
</protein>
<feature type="signal peptide" evidence="4">
    <location>
        <begin position="1"/>
        <end position="24"/>
    </location>
</feature>
<feature type="propeptide" id="PRO_0000457362" evidence="5">
    <location>
        <begin position="25"/>
        <end position="45"/>
    </location>
</feature>
<feature type="chain" id="PRO_0000457363" description="Alpha-conotoxin FrXXA" evidence="5">
    <location>
        <begin position="46"/>
        <end position="92"/>
    </location>
</feature>
<feature type="disulfide bond" description="Interchain (with C-63)" evidence="1">
    <location>
        <position position="51"/>
    </location>
</feature>
<feature type="disulfide bond" description="Interchain (with C-51)" evidence="1">
    <location>
        <position position="62"/>
    </location>
</feature>
<feature type="disulfide bond" evidence="1">
    <location>
        <begin position="63"/>
        <end position="72"/>
    </location>
</feature>
<feature type="disulfide bond" evidence="1">
    <location>
        <begin position="68"/>
        <end position="80"/>
    </location>
</feature>
<feature type="disulfide bond" evidence="1">
    <location>
        <begin position="73"/>
        <end position="90"/>
    </location>
</feature>
<feature type="disulfide bond" evidence="1">
    <location>
        <begin position="78"/>
        <end position="92"/>
    </location>
</feature>
<feature type="sequence conflict" description="In Ref. 1." evidence="7" ref="1">
    <original>S</original>
    <variation>P</variation>
    <location>
        <position position="17"/>
    </location>
</feature>
<feature type="sequence conflict" description="In Ref. 1." evidence="7" ref="1">
    <original>S</original>
    <variation>V</variation>
    <location>
        <position position="21"/>
    </location>
</feature>
<keyword id="KW-0008">Acetylcholine receptor inhibiting toxin</keyword>
<keyword id="KW-1015">Disulfide bond</keyword>
<keyword id="KW-0872">Ion channel impairing toxin</keyword>
<keyword id="KW-0528">Neurotoxin</keyword>
<keyword id="KW-0629">Postsynaptic neurotoxin</keyword>
<keyword id="KW-0964">Secreted</keyword>
<keyword id="KW-0732">Signal</keyword>
<keyword id="KW-0800">Toxin</keyword>
<dbReference type="SMR" id="P0DQX0"/>
<dbReference type="GO" id="GO:0005576">
    <property type="term" value="C:extracellular region"/>
    <property type="evidence" value="ECO:0007669"/>
    <property type="project" value="UniProtKB-SubCell"/>
</dbReference>
<dbReference type="GO" id="GO:0035792">
    <property type="term" value="C:host cell postsynaptic membrane"/>
    <property type="evidence" value="ECO:0007669"/>
    <property type="project" value="UniProtKB-KW"/>
</dbReference>
<dbReference type="GO" id="GO:0030550">
    <property type="term" value="F:acetylcholine receptor inhibitor activity"/>
    <property type="evidence" value="ECO:0007669"/>
    <property type="project" value="UniProtKB-KW"/>
</dbReference>
<dbReference type="GO" id="GO:0099106">
    <property type="term" value="F:ion channel regulator activity"/>
    <property type="evidence" value="ECO:0007669"/>
    <property type="project" value="UniProtKB-KW"/>
</dbReference>
<dbReference type="GO" id="GO:0090729">
    <property type="term" value="F:toxin activity"/>
    <property type="evidence" value="ECO:0007669"/>
    <property type="project" value="UniProtKB-KW"/>
</dbReference>
<sequence>MPKLEMMLLVLLILPLSYFDSAGGQAVKVDGHGDGMDRYLQRDDREARITCQPRGRSKWGRCCLTQMCGNFCCPRYGCRCVYRSGRGHGCSC</sequence>
<accession>P0DQX0</accession>
<evidence type="ECO:0000250" key="1">
    <source>
        <dbReference type="UniProtKB" id="A0A0A0VBX4"/>
    </source>
</evidence>
<evidence type="ECO:0000250" key="2">
    <source>
        <dbReference type="UniProtKB" id="P0C1W6"/>
    </source>
</evidence>
<evidence type="ECO:0000250" key="3">
    <source>
        <dbReference type="UniProtKB" id="P0DQX1"/>
    </source>
</evidence>
<evidence type="ECO:0000255" key="4"/>
<evidence type="ECO:0000269" key="5">
    <source>
    </source>
</evidence>
<evidence type="ECO:0000303" key="6">
    <source>
    </source>
</evidence>
<evidence type="ECO:0000305" key="7"/>
<evidence type="ECO:0000305" key="8">
    <source>
    </source>
</evidence>
<name>CDKA1_CONFE</name>
<reference key="1">
    <citation type="journal article" date="2022" name="Toxins">
        <title>A novel dimeric conotoxin, FrXXA, from the vermivorous cone snail Conus fergusoni, of the Eastern Pacific, inhibits nicotinic acetylcholine receptors.</title>
        <authorList>
            <person name="Rodriguez-Ruiz X.C."/>
            <person name="Aguilar M.B."/>
            <person name="Ortiz-Arellano M.A."/>
            <person name="Safavi-Hemami H."/>
            <person name="Lopez-Vera E."/>
        </authorList>
    </citation>
    <scope>NUCLEOTIDE SEQUENCE [MRNA]</scope>
    <scope>FUNCTION</scope>
    <scope>SUBCELLULAR LOCATION</scope>
    <scope>SUBUNIT</scope>
    <source>
        <tissue>Venom</tissue>
        <tissue>Venom duct</tissue>
    </source>
</reference>
<comment type="function">
    <text evidence="2 3">Alpha-conotoxins act on postsynaptic membranes, they bind to the nicotinic acetylcholine receptors (nAChR) and thus inhibit them. Through its two C-terminal domains, this homodimeric protein would bind to two nAChR allosteric sites, located outside the nAChR C-loop of the principal binding face and at the adjacent binding interface in a clockwise direction (By similarity). This toxin blocks both neuronal and muscular subtypes: human alpha-7/CHRNA7, human alpha-3-beta-2 (CHRNA3-CHRNB2), human alpha-4-beta-2 (CHRNA4-CHRNB2), mouse adult muscular subtype alpha-1-beta-1-delta-epsilon (CHRNA1-CHRNB1-CHRND-CHRNE), and mouse fetal muscular subtype alpha-1-beta-1-gamma-delta (CHRNA1-CHRNB1-CHRNG-CHRND) (By similarity). Shows different dissociation rates towards the different subtypes, with a very slow rate towards alpha-7 subtype (almost irreversible), followed by the adult muscular subtype, the fetal muscular subtype, alpha-3-beta-2 and alpha-4-beta-2 (almost entirely reversible within a few minutes of washing) (By similarity).</text>
</comment>
<comment type="subunit">
    <text evidence="8">Homodimer; disulfide-linked.</text>
</comment>
<comment type="subcellular location">
    <subcellularLocation>
        <location evidence="5">Secreted</location>
    </subcellularLocation>
</comment>
<comment type="tissue specificity">
    <text evidence="8">Expressed by the venom duct.</text>
</comment>
<comment type="domain">
    <text evidence="7">The cysteine framework is XX (C-CC-C-CC-C-C-C-C).</text>
</comment>
<comment type="domain">
    <text evidence="2">Displays a mini-granulin fold, a structure composed of two short, stacked beta-hairpins connected by two parallel disulfide bonds. This newly described fold is derived from the same cysteine connectivity as knottins (ICK fold). The name 'mini-granulin fold' comes from the structural homology with the N-terminal region of the human granulin.</text>
</comment>
<comment type="PTM">
    <text evidence="7">The homodimer contains 10 disulfide bonds.</text>
</comment>
<comment type="similarity">
    <text evidence="7">Belongs to the conotoxin D superfamily.</text>
</comment>